<name>PANB2_ZYMMO</name>
<reference key="1">
    <citation type="journal article" date="2005" name="Nat. Biotechnol.">
        <title>The genome sequence of the ethanologenic bacterium Zymomonas mobilis ZM4.</title>
        <authorList>
            <person name="Seo J.-S."/>
            <person name="Chong H."/>
            <person name="Park H.S."/>
            <person name="Yoon K.-O."/>
            <person name="Jung C."/>
            <person name="Kim J.J."/>
            <person name="Hong J.H."/>
            <person name="Kim H."/>
            <person name="Kim J.-H."/>
            <person name="Kil J.-I."/>
            <person name="Park C.J."/>
            <person name="Oh H.-M."/>
            <person name="Lee J.-S."/>
            <person name="Jin S.-J."/>
            <person name="Um H.-W."/>
            <person name="Lee H.-J."/>
            <person name="Oh S.-J."/>
            <person name="Kim J.Y."/>
            <person name="Kang H.L."/>
            <person name="Lee S.Y."/>
            <person name="Lee K.J."/>
            <person name="Kang H.S."/>
        </authorList>
    </citation>
    <scope>NUCLEOTIDE SEQUENCE [LARGE SCALE GENOMIC DNA]</scope>
    <source>
        <strain>ATCC 31821 / ZM4 / CP4</strain>
    </source>
</reference>
<keyword id="KW-0963">Cytoplasm</keyword>
<keyword id="KW-0460">Magnesium</keyword>
<keyword id="KW-0479">Metal-binding</keyword>
<keyword id="KW-0566">Pantothenate biosynthesis</keyword>
<keyword id="KW-1185">Reference proteome</keyword>
<keyword id="KW-0808">Transferase</keyword>
<comment type="function">
    <text evidence="1">Catalyzes the reversible reaction in which hydroxymethyl group from 5,10-methylenetetrahydrofolate is transferred onto alpha-ketoisovalerate to form ketopantoate.</text>
</comment>
<comment type="catalytic activity">
    <reaction evidence="1">
        <text>3-methyl-2-oxobutanoate + (6R)-5,10-methylene-5,6,7,8-tetrahydrofolate + H2O = 2-dehydropantoate + (6S)-5,6,7,8-tetrahydrofolate</text>
        <dbReference type="Rhea" id="RHEA:11824"/>
        <dbReference type="ChEBI" id="CHEBI:11561"/>
        <dbReference type="ChEBI" id="CHEBI:11851"/>
        <dbReference type="ChEBI" id="CHEBI:15377"/>
        <dbReference type="ChEBI" id="CHEBI:15636"/>
        <dbReference type="ChEBI" id="CHEBI:57453"/>
        <dbReference type="EC" id="2.1.2.11"/>
    </reaction>
</comment>
<comment type="cofactor">
    <cofactor evidence="1">
        <name>Mg(2+)</name>
        <dbReference type="ChEBI" id="CHEBI:18420"/>
    </cofactor>
    <text evidence="1">Binds 1 Mg(2+) ion per subunit.</text>
</comment>
<comment type="pathway">
    <text evidence="1">Cofactor biosynthesis; (R)-pantothenate biosynthesis; (R)-pantoate from 3-methyl-2-oxobutanoate: step 1/2.</text>
</comment>
<comment type="subunit">
    <text evidence="1">Homodecamer; pentamer of dimers.</text>
</comment>
<comment type="subcellular location">
    <subcellularLocation>
        <location evidence="1">Cytoplasm</location>
    </subcellularLocation>
</comment>
<comment type="similarity">
    <text evidence="1">Belongs to the PanB family.</text>
</comment>
<feature type="chain" id="PRO_0000297419" description="3-methyl-2-oxobutanoate hydroxymethyltransferase 2">
    <location>
        <begin position="1"/>
        <end position="273"/>
    </location>
</feature>
<feature type="active site" description="Proton acceptor" evidence="1">
    <location>
        <position position="188"/>
    </location>
</feature>
<feature type="binding site" evidence="1">
    <location>
        <begin position="50"/>
        <end position="51"/>
    </location>
    <ligand>
        <name>3-methyl-2-oxobutanoate</name>
        <dbReference type="ChEBI" id="CHEBI:11851"/>
    </ligand>
</feature>
<feature type="binding site" evidence="1">
    <location>
        <position position="50"/>
    </location>
    <ligand>
        <name>Mg(2+)</name>
        <dbReference type="ChEBI" id="CHEBI:18420"/>
    </ligand>
</feature>
<feature type="binding site" evidence="1">
    <location>
        <position position="89"/>
    </location>
    <ligand>
        <name>3-methyl-2-oxobutanoate</name>
        <dbReference type="ChEBI" id="CHEBI:11851"/>
    </ligand>
</feature>
<feature type="binding site" evidence="1">
    <location>
        <position position="89"/>
    </location>
    <ligand>
        <name>Mg(2+)</name>
        <dbReference type="ChEBI" id="CHEBI:18420"/>
    </ligand>
</feature>
<feature type="binding site" evidence="1">
    <location>
        <position position="119"/>
    </location>
    <ligand>
        <name>3-methyl-2-oxobutanoate</name>
        <dbReference type="ChEBI" id="CHEBI:11851"/>
    </ligand>
</feature>
<feature type="binding site" evidence="1">
    <location>
        <position position="121"/>
    </location>
    <ligand>
        <name>Mg(2+)</name>
        <dbReference type="ChEBI" id="CHEBI:18420"/>
    </ligand>
</feature>
<sequence>MSAIPSSNKRRTIPELRARKGKSPIVALTAYSALTARFVDPYADFILVGDSLAMVEHGMATTIGASLDMMILHGQSVMRGSEKAAVVIDMPFGSYEASPQEAYHNAVRILSETGCSAVKLEGGSHLAPVIAFLTARGVPVMGHIGLTPQYVQTLGGFKIQGHSSEQQDKIKQDALDFEAAGAFSVVLEGVTEPLAREITDNIAIPTIGIGASSYCDGQVLVLEDMLGFNDKVPRFVKKFAHLGDDIKKAVSDYATAVSNRSFPAEDNIYRPKS</sequence>
<dbReference type="EC" id="2.1.2.11" evidence="1"/>
<dbReference type="EMBL" id="AE008692">
    <property type="protein sequence ID" value="AAV90594.1"/>
    <property type="molecule type" value="Genomic_DNA"/>
</dbReference>
<dbReference type="SMR" id="Q5NL16"/>
<dbReference type="STRING" id="264203.ZMO1970"/>
<dbReference type="KEGG" id="zmo:ZMO1970"/>
<dbReference type="eggNOG" id="COG0413">
    <property type="taxonomic scope" value="Bacteria"/>
</dbReference>
<dbReference type="HOGENOM" id="CLU_036645_1_0_5"/>
<dbReference type="UniPathway" id="UPA00028">
    <property type="reaction ID" value="UER00003"/>
</dbReference>
<dbReference type="Proteomes" id="UP000001173">
    <property type="component" value="Chromosome"/>
</dbReference>
<dbReference type="GO" id="GO:0005737">
    <property type="term" value="C:cytoplasm"/>
    <property type="evidence" value="ECO:0007669"/>
    <property type="project" value="UniProtKB-SubCell"/>
</dbReference>
<dbReference type="GO" id="GO:0003864">
    <property type="term" value="F:3-methyl-2-oxobutanoate hydroxymethyltransferase activity"/>
    <property type="evidence" value="ECO:0007669"/>
    <property type="project" value="UniProtKB-UniRule"/>
</dbReference>
<dbReference type="GO" id="GO:0000287">
    <property type="term" value="F:magnesium ion binding"/>
    <property type="evidence" value="ECO:0007669"/>
    <property type="project" value="TreeGrafter"/>
</dbReference>
<dbReference type="GO" id="GO:0015940">
    <property type="term" value="P:pantothenate biosynthetic process"/>
    <property type="evidence" value="ECO:0007669"/>
    <property type="project" value="UniProtKB-UniRule"/>
</dbReference>
<dbReference type="CDD" id="cd06557">
    <property type="entry name" value="KPHMT-like"/>
    <property type="match status" value="1"/>
</dbReference>
<dbReference type="FunFam" id="3.20.20.60:FF:000003">
    <property type="entry name" value="3-methyl-2-oxobutanoate hydroxymethyltransferase"/>
    <property type="match status" value="1"/>
</dbReference>
<dbReference type="Gene3D" id="3.20.20.60">
    <property type="entry name" value="Phosphoenolpyruvate-binding domains"/>
    <property type="match status" value="1"/>
</dbReference>
<dbReference type="HAMAP" id="MF_00156">
    <property type="entry name" value="PanB"/>
    <property type="match status" value="1"/>
</dbReference>
<dbReference type="InterPro" id="IPR003700">
    <property type="entry name" value="Pantoate_hydroxy_MeTrfase"/>
</dbReference>
<dbReference type="InterPro" id="IPR015813">
    <property type="entry name" value="Pyrv/PenolPyrv_kinase-like_dom"/>
</dbReference>
<dbReference type="InterPro" id="IPR040442">
    <property type="entry name" value="Pyrv_kinase-like_dom_sf"/>
</dbReference>
<dbReference type="NCBIfam" id="TIGR00222">
    <property type="entry name" value="panB"/>
    <property type="match status" value="1"/>
</dbReference>
<dbReference type="NCBIfam" id="NF001452">
    <property type="entry name" value="PRK00311.1"/>
    <property type="match status" value="1"/>
</dbReference>
<dbReference type="PANTHER" id="PTHR20881">
    <property type="entry name" value="3-METHYL-2-OXOBUTANOATE HYDROXYMETHYLTRANSFERASE"/>
    <property type="match status" value="1"/>
</dbReference>
<dbReference type="PANTHER" id="PTHR20881:SF0">
    <property type="entry name" value="3-METHYL-2-OXOBUTANOATE HYDROXYMETHYLTRANSFERASE"/>
    <property type="match status" value="1"/>
</dbReference>
<dbReference type="Pfam" id="PF02548">
    <property type="entry name" value="Pantoate_transf"/>
    <property type="match status" value="1"/>
</dbReference>
<dbReference type="PIRSF" id="PIRSF000388">
    <property type="entry name" value="Pantoate_hydroxy_MeTrfase"/>
    <property type="match status" value="1"/>
</dbReference>
<dbReference type="SUPFAM" id="SSF51621">
    <property type="entry name" value="Phosphoenolpyruvate/pyruvate domain"/>
    <property type="match status" value="1"/>
</dbReference>
<protein>
    <recommendedName>
        <fullName evidence="1">3-methyl-2-oxobutanoate hydroxymethyltransferase 2</fullName>
        <ecNumber evidence="1">2.1.2.11</ecNumber>
    </recommendedName>
    <alternativeName>
        <fullName evidence="1">Ketopantoate hydroxymethyltransferase 2</fullName>
        <shortName evidence="1">KPHMT 2</shortName>
    </alternativeName>
</protein>
<organism>
    <name type="scientific">Zymomonas mobilis subsp. mobilis (strain ATCC 31821 / ZM4 / CP4)</name>
    <dbReference type="NCBI Taxonomy" id="264203"/>
    <lineage>
        <taxon>Bacteria</taxon>
        <taxon>Pseudomonadati</taxon>
        <taxon>Pseudomonadota</taxon>
        <taxon>Alphaproteobacteria</taxon>
        <taxon>Sphingomonadales</taxon>
        <taxon>Zymomonadaceae</taxon>
        <taxon>Zymomonas</taxon>
    </lineage>
</organism>
<gene>
    <name evidence="1" type="primary">panB2</name>
    <name type="ordered locus">ZMO1970</name>
</gene>
<evidence type="ECO:0000255" key="1">
    <source>
        <dbReference type="HAMAP-Rule" id="MF_00156"/>
    </source>
</evidence>
<proteinExistence type="inferred from homology"/>
<accession>Q5NL16</accession>